<keyword id="KW-1185">Reference proteome</keyword>
<keyword id="KW-0687">Ribonucleoprotein</keyword>
<keyword id="KW-0689">Ribosomal protein</keyword>
<keyword id="KW-0694">RNA-binding</keyword>
<keyword id="KW-0699">rRNA-binding</keyword>
<keyword id="KW-0820">tRNA-binding</keyword>
<organism>
    <name type="scientific">Chlorobium phaeobacteroides (strain DSM 266 / SMG 266 / 2430)</name>
    <dbReference type="NCBI Taxonomy" id="290317"/>
    <lineage>
        <taxon>Bacteria</taxon>
        <taxon>Pseudomonadati</taxon>
        <taxon>Chlorobiota</taxon>
        <taxon>Chlorobiia</taxon>
        <taxon>Chlorobiales</taxon>
        <taxon>Chlorobiaceae</taxon>
        <taxon>Chlorobium/Pelodictyon group</taxon>
        <taxon>Chlorobium</taxon>
    </lineage>
</organism>
<proteinExistence type="inferred from homology"/>
<sequence>MLMPKRVKYRKTMRGRMKGNSGRGTSVDFGSFGLKALEPAWITSRQIEAARVAMTRFMKRDGKIWIRIFPDKPVTKKAAETRMGSGKGSPEFWVAVVKPGRIMFEADGVPREVATEAFRLAAQKLPIKTKFIVRPDYEG</sequence>
<dbReference type="EMBL" id="CP000492">
    <property type="protein sequence ID" value="ABL66404.1"/>
    <property type="molecule type" value="Genomic_DNA"/>
</dbReference>
<dbReference type="RefSeq" id="WP_011746186.1">
    <property type="nucleotide sequence ID" value="NC_008639.1"/>
</dbReference>
<dbReference type="SMR" id="A1BJ27"/>
<dbReference type="STRING" id="290317.Cpha266_2416"/>
<dbReference type="KEGG" id="cph:Cpha266_2416"/>
<dbReference type="eggNOG" id="COG0197">
    <property type="taxonomic scope" value="Bacteria"/>
</dbReference>
<dbReference type="HOGENOM" id="CLU_078858_2_1_10"/>
<dbReference type="OrthoDB" id="9802589at2"/>
<dbReference type="Proteomes" id="UP000008701">
    <property type="component" value="Chromosome"/>
</dbReference>
<dbReference type="GO" id="GO:0022625">
    <property type="term" value="C:cytosolic large ribosomal subunit"/>
    <property type="evidence" value="ECO:0007669"/>
    <property type="project" value="TreeGrafter"/>
</dbReference>
<dbReference type="GO" id="GO:0019843">
    <property type="term" value="F:rRNA binding"/>
    <property type="evidence" value="ECO:0007669"/>
    <property type="project" value="UniProtKB-UniRule"/>
</dbReference>
<dbReference type="GO" id="GO:0003735">
    <property type="term" value="F:structural constituent of ribosome"/>
    <property type="evidence" value="ECO:0007669"/>
    <property type="project" value="InterPro"/>
</dbReference>
<dbReference type="GO" id="GO:0000049">
    <property type="term" value="F:tRNA binding"/>
    <property type="evidence" value="ECO:0007669"/>
    <property type="project" value="UniProtKB-KW"/>
</dbReference>
<dbReference type="GO" id="GO:0006412">
    <property type="term" value="P:translation"/>
    <property type="evidence" value="ECO:0007669"/>
    <property type="project" value="UniProtKB-UniRule"/>
</dbReference>
<dbReference type="CDD" id="cd01433">
    <property type="entry name" value="Ribosomal_L16_L10e"/>
    <property type="match status" value="1"/>
</dbReference>
<dbReference type="FunFam" id="3.90.1170.10:FF:000001">
    <property type="entry name" value="50S ribosomal protein L16"/>
    <property type="match status" value="1"/>
</dbReference>
<dbReference type="Gene3D" id="3.90.1170.10">
    <property type="entry name" value="Ribosomal protein L10e/L16"/>
    <property type="match status" value="1"/>
</dbReference>
<dbReference type="HAMAP" id="MF_01342">
    <property type="entry name" value="Ribosomal_uL16"/>
    <property type="match status" value="1"/>
</dbReference>
<dbReference type="InterPro" id="IPR047873">
    <property type="entry name" value="Ribosomal_uL16"/>
</dbReference>
<dbReference type="InterPro" id="IPR000114">
    <property type="entry name" value="Ribosomal_uL16_bact-type"/>
</dbReference>
<dbReference type="InterPro" id="IPR020798">
    <property type="entry name" value="Ribosomal_uL16_CS"/>
</dbReference>
<dbReference type="InterPro" id="IPR016180">
    <property type="entry name" value="Ribosomal_uL16_dom"/>
</dbReference>
<dbReference type="InterPro" id="IPR036920">
    <property type="entry name" value="Ribosomal_uL16_sf"/>
</dbReference>
<dbReference type="NCBIfam" id="TIGR01164">
    <property type="entry name" value="rplP_bact"/>
    <property type="match status" value="1"/>
</dbReference>
<dbReference type="PANTHER" id="PTHR12220">
    <property type="entry name" value="50S/60S RIBOSOMAL PROTEIN L16"/>
    <property type="match status" value="1"/>
</dbReference>
<dbReference type="PANTHER" id="PTHR12220:SF13">
    <property type="entry name" value="LARGE RIBOSOMAL SUBUNIT PROTEIN UL16M"/>
    <property type="match status" value="1"/>
</dbReference>
<dbReference type="Pfam" id="PF00252">
    <property type="entry name" value="Ribosomal_L16"/>
    <property type="match status" value="1"/>
</dbReference>
<dbReference type="PRINTS" id="PR00060">
    <property type="entry name" value="RIBOSOMALL16"/>
</dbReference>
<dbReference type="SUPFAM" id="SSF54686">
    <property type="entry name" value="Ribosomal protein L16p/L10e"/>
    <property type="match status" value="1"/>
</dbReference>
<dbReference type="PROSITE" id="PS00586">
    <property type="entry name" value="RIBOSOMAL_L16_1"/>
    <property type="match status" value="1"/>
</dbReference>
<dbReference type="PROSITE" id="PS00701">
    <property type="entry name" value="RIBOSOMAL_L16_2"/>
    <property type="match status" value="1"/>
</dbReference>
<feature type="chain" id="PRO_1000054602" description="Large ribosomal subunit protein uL16">
    <location>
        <begin position="1"/>
        <end position="139"/>
    </location>
</feature>
<name>RL16_CHLPD</name>
<gene>
    <name evidence="1" type="primary">rplP</name>
    <name type="ordered locus">Cpha266_2416</name>
</gene>
<evidence type="ECO:0000255" key="1">
    <source>
        <dbReference type="HAMAP-Rule" id="MF_01342"/>
    </source>
</evidence>
<evidence type="ECO:0000305" key="2"/>
<accession>A1BJ27</accession>
<comment type="function">
    <text evidence="1">Binds 23S rRNA and is also seen to make contacts with the A and possibly P site tRNAs.</text>
</comment>
<comment type="subunit">
    <text evidence="1">Part of the 50S ribosomal subunit.</text>
</comment>
<comment type="similarity">
    <text evidence="1">Belongs to the universal ribosomal protein uL16 family.</text>
</comment>
<reference key="1">
    <citation type="submission" date="2006-12" db="EMBL/GenBank/DDBJ databases">
        <title>Complete sequence of Chlorobium phaeobacteroides DSM 266.</title>
        <authorList>
            <consortium name="US DOE Joint Genome Institute"/>
            <person name="Copeland A."/>
            <person name="Lucas S."/>
            <person name="Lapidus A."/>
            <person name="Barry K."/>
            <person name="Detter J.C."/>
            <person name="Glavina del Rio T."/>
            <person name="Hammon N."/>
            <person name="Israni S."/>
            <person name="Pitluck S."/>
            <person name="Goltsman E."/>
            <person name="Schmutz J."/>
            <person name="Larimer F."/>
            <person name="Land M."/>
            <person name="Hauser L."/>
            <person name="Mikhailova N."/>
            <person name="Li T."/>
            <person name="Overmann J."/>
            <person name="Bryant D.A."/>
            <person name="Richardson P."/>
        </authorList>
    </citation>
    <scope>NUCLEOTIDE SEQUENCE [LARGE SCALE GENOMIC DNA]</scope>
    <source>
        <strain>DSM 266 / SMG 266 / 2430</strain>
    </source>
</reference>
<protein>
    <recommendedName>
        <fullName evidence="1">Large ribosomal subunit protein uL16</fullName>
    </recommendedName>
    <alternativeName>
        <fullName evidence="2">50S ribosomal protein L16</fullName>
    </alternativeName>
</protein>